<name>SNPC1_HUMAN</name>
<proteinExistence type="evidence at protein level"/>
<comment type="function">
    <text evidence="3">Part of the SNAPc complex required for the transcription of both RNA polymerase II and III small-nuclear RNA genes. Binds to the proximal sequence element (PSE), a non-TATA-box basal promoter element common to these 2 types of genes. Recruits TBP and BRF2 to the U6 snRNA TATA box.</text>
</comment>
<comment type="subunit">
    <text evidence="2 3">Part of the SNAPc complex composed of 5 subunits: SNAPC1, SNAPC2, SNAPC3, SNAPC4 and SNAPC5. SNAPC1 interacts with SNAPC3, SNAPC4 and TBP.</text>
</comment>
<comment type="interaction">
    <interactant intactId="EBI-11915024">
        <id>Q16533</id>
    </interactant>
    <interactant intactId="EBI-1045350">
        <id>Q16204</id>
        <label>CCDC6</label>
    </interactant>
    <organismsDiffer>false</organismsDiffer>
    <experiments>3</experiments>
</comment>
<comment type="interaction">
    <interactant intactId="EBI-11915024">
        <id>Q16533</id>
    </interactant>
    <interactant intactId="EBI-742102">
        <id>Q8IYI6</id>
        <label>EXOC8</label>
    </interactant>
    <organismsDiffer>false</organismsDiffer>
    <experiments>3</experiments>
</comment>
<comment type="interaction">
    <interactant intactId="EBI-11915024">
        <id>Q16533</id>
    </interactant>
    <interactant intactId="EBI-2339359">
        <id>O14929</id>
        <label>HAT1</label>
    </interactant>
    <organismsDiffer>false</organismsDiffer>
    <experiments>3</experiments>
</comment>
<comment type="interaction">
    <interactant intactId="EBI-11915024">
        <id>Q16533</id>
    </interactant>
    <interactant intactId="EBI-7116203">
        <id>O75031</id>
        <label>HSF2BP</label>
    </interactant>
    <organismsDiffer>false</organismsDiffer>
    <experiments>3</experiments>
</comment>
<comment type="interaction">
    <interactant intactId="EBI-11915024">
        <id>Q16533</id>
    </interactant>
    <interactant intactId="EBI-1760638">
        <id>Q92966</id>
        <label>SNAPC3</label>
    </interactant>
    <organismsDiffer>false</organismsDiffer>
    <experiments>9</experiments>
</comment>
<comment type="interaction">
    <interactant intactId="EBI-11915024">
        <id>Q16533</id>
    </interactant>
    <interactant intactId="EBI-2801093">
        <id>Q5SXM2</id>
        <label>SNAPC4</label>
    </interactant>
    <organismsDiffer>false</organismsDiffer>
    <experiments>12</experiments>
</comment>
<comment type="subcellular location">
    <subcellularLocation>
        <location>Nucleus</location>
    </subcellularLocation>
</comment>
<feature type="chain" id="PRO_0000072017" description="snRNA-activating protein complex subunit 1">
    <location>
        <begin position="1"/>
        <end position="368"/>
    </location>
</feature>
<feature type="region of interest" description="SNAPC3-binding">
    <location>
        <begin position="1"/>
        <end position="168"/>
    </location>
</feature>
<feature type="region of interest" description="SNAPC4-binding">
    <location>
        <begin position="164"/>
        <end position="268"/>
    </location>
</feature>
<feature type="region of interest" description="Disordered" evidence="1">
    <location>
        <begin position="224"/>
        <end position="257"/>
    </location>
</feature>
<feature type="region of interest" description="Disordered" evidence="1">
    <location>
        <begin position="275"/>
        <end position="368"/>
    </location>
</feature>
<feature type="compositionally biased region" description="Basic and acidic residues" evidence="1">
    <location>
        <begin position="238"/>
        <end position="257"/>
    </location>
</feature>
<feature type="modified residue" description="Phosphoserine" evidence="5">
    <location>
        <position position="289"/>
    </location>
</feature>
<feature type="modified residue" description="Phosphoserine" evidence="4 5">
    <location>
        <position position="290"/>
    </location>
</feature>
<feature type="helix" evidence="7">
    <location>
        <begin position="7"/>
        <end position="19"/>
    </location>
</feature>
<feature type="turn" evidence="7">
    <location>
        <begin position="20"/>
        <end position="22"/>
    </location>
</feature>
<feature type="helix" evidence="7">
    <location>
        <begin position="26"/>
        <end position="36"/>
    </location>
</feature>
<feature type="helix" evidence="7">
    <location>
        <begin position="38"/>
        <end position="42"/>
    </location>
</feature>
<feature type="helix" evidence="7">
    <location>
        <begin position="48"/>
        <end position="66"/>
    </location>
</feature>
<feature type="helix" evidence="7">
    <location>
        <begin position="72"/>
        <end position="87"/>
    </location>
</feature>
<feature type="strand" evidence="8">
    <location>
        <begin position="91"/>
        <end position="93"/>
    </location>
</feature>
<feature type="strand" evidence="7">
    <location>
        <begin position="97"/>
        <end position="99"/>
    </location>
</feature>
<feature type="strand" evidence="6">
    <location>
        <begin position="101"/>
        <end position="103"/>
    </location>
</feature>
<feature type="helix" evidence="7">
    <location>
        <begin position="104"/>
        <end position="116"/>
    </location>
</feature>
<feature type="helix" evidence="7">
    <location>
        <begin position="120"/>
        <end position="131"/>
    </location>
</feature>
<feature type="strand" evidence="7">
    <location>
        <begin position="135"/>
        <end position="142"/>
    </location>
</feature>
<feature type="helix" evidence="7">
    <location>
        <begin position="167"/>
        <end position="171"/>
    </location>
</feature>
<feature type="helix" evidence="7">
    <location>
        <begin position="174"/>
        <end position="194"/>
    </location>
</feature>
<feature type="strand" evidence="7">
    <location>
        <begin position="195"/>
        <end position="200"/>
    </location>
</feature>
<feature type="helix" evidence="7">
    <location>
        <begin position="212"/>
        <end position="231"/>
    </location>
</feature>
<reference key="1">
    <citation type="journal article" date="1995" name="Nature">
        <title>A TBP-TAF complex required for transcription of human snRNA genes by RNA polymerase II and III.</title>
        <authorList>
            <person name="Henry R.W."/>
            <person name="Sadowski C.L."/>
            <person name="Kobayashi R."/>
            <person name="Hernandez N."/>
        </authorList>
    </citation>
    <scope>NUCLEOTIDE SEQUENCE [MRNA]</scope>
    <scope>PARTIAL PROTEIN SEQUENCE</scope>
</reference>
<reference key="2">
    <citation type="journal article" date="1996" name="Mol. Cell. Biol.">
        <title>Cloning of two proximal sequence element-binding transcription factor subunits (gamma and delta) that are required for transcription of small nuclear RNA genes by RNA polymerases II and III and interact with the TATA-binding protein.</title>
        <authorList>
            <person name="Yoon J.B."/>
            <person name="Roeder R.G."/>
        </authorList>
    </citation>
    <scope>NUCLEOTIDE SEQUENCE [MRNA]</scope>
</reference>
<reference key="3">
    <citation type="journal article" date="2004" name="Genome Res.">
        <title>The status, quality, and expansion of the NIH full-length cDNA project: the Mammalian Gene Collection (MGC).</title>
        <authorList>
            <consortium name="The MGC Project Team"/>
        </authorList>
    </citation>
    <scope>NUCLEOTIDE SEQUENCE [LARGE SCALE MRNA]</scope>
    <source>
        <tissue>Kidney</tissue>
        <tissue>Skin</tissue>
    </source>
</reference>
<reference key="4">
    <citation type="journal article" date="2001" name="J. Biol. Chem.">
        <title>A map of protein-protein contacts within the small nuclear RNA-activating protein complex SNAPc.</title>
        <authorList>
            <person name="Ma B."/>
            <person name="Hernandez N."/>
        </authorList>
    </citation>
    <scope>INTERACTION WITH SNAPC3 AND SNAPC4</scope>
</reference>
<reference key="5">
    <citation type="journal article" date="2003" name="J. Biol. Chem.">
        <title>The small nuclear RNA-activating protein 190 Myb DNA binding domain stimulates TATA box-binding protein-TATA box recognition.</title>
        <authorList>
            <person name="Hinkley C.S."/>
            <person name="Hirsch H.A."/>
            <person name="Gu L."/>
            <person name="LaMere B."/>
            <person name="Henry R.W."/>
        </authorList>
    </citation>
    <scope>FUNCTION</scope>
    <scope>INTERACTION WITH SNAPC3 AND TBP</scope>
</reference>
<reference key="6">
    <citation type="journal article" date="2008" name="Proc. Natl. Acad. Sci. U.S.A.">
        <title>A quantitative atlas of mitotic phosphorylation.</title>
        <authorList>
            <person name="Dephoure N."/>
            <person name="Zhou C."/>
            <person name="Villen J."/>
            <person name="Beausoleil S.A."/>
            <person name="Bakalarski C.E."/>
            <person name="Elledge S.J."/>
            <person name="Gygi S.P."/>
        </authorList>
    </citation>
    <scope>PHOSPHORYLATION [LARGE SCALE ANALYSIS] AT SER-290</scope>
    <scope>IDENTIFICATION BY MASS SPECTROMETRY [LARGE SCALE ANALYSIS]</scope>
    <source>
        <tissue>Cervix carcinoma</tissue>
    </source>
</reference>
<reference key="7">
    <citation type="journal article" date="2011" name="Sci. Signal.">
        <title>System-wide temporal characterization of the proteome and phosphoproteome of human embryonic stem cell differentiation.</title>
        <authorList>
            <person name="Rigbolt K.T."/>
            <person name="Prokhorova T.A."/>
            <person name="Akimov V."/>
            <person name="Henningsen J."/>
            <person name="Johansen P.T."/>
            <person name="Kratchmarova I."/>
            <person name="Kassem M."/>
            <person name="Mann M."/>
            <person name="Olsen J.V."/>
            <person name="Blagoev B."/>
        </authorList>
    </citation>
    <scope>PHOSPHORYLATION [LARGE SCALE ANALYSIS] AT SER-289 AND SER-290</scope>
    <scope>IDENTIFICATION BY MASS SPECTROMETRY [LARGE SCALE ANALYSIS]</scope>
</reference>
<gene>
    <name type="primary">SNAPC1</name>
    <name type="synonym">SNAP43</name>
</gene>
<evidence type="ECO:0000256" key="1">
    <source>
        <dbReference type="SAM" id="MobiDB-lite"/>
    </source>
</evidence>
<evidence type="ECO:0000269" key="2">
    <source>
    </source>
</evidence>
<evidence type="ECO:0000269" key="3">
    <source>
    </source>
</evidence>
<evidence type="ECO:0007744" key="4">
    <source>
    </source>
</evidence>
<evidence type="ECO:0007744" key="5">
    <source>
    </source>
</evidence>
<evidence type="ECO:0007829" key="6">
    <source>
        <dbReference type="PDB" id="7XUR"/>
    </source>
</evidence>
<evidence type="ECO:0007829" key="7">
    <source>
        <dbReference type="PDB" id="7ZWC"/>
    </source>
</evidence>
<evidence type="ECO:0007829" key="8">
    <source>
        <dbReference type="PDB" id="8IUH"/>
    </source>
</evidence>
<organism>
    <name type="scientific">Homo sapiens</name>
    <name type="common">Human</name>
    <dbReference type="NCBI Taxonomy" id="9606"/>
    <lineage>
        <taxon>Eukaryota</taxon>
        <taxon>Metazoa</taxon>
        <taxon>Chordata</taxon>
        <taxon>Craniata</taxon>
        <taxon>Vertebrata</taxon>
        <taxon>Euteleostomi</taxon>
        <taxon>Mammalia</taxon>
        <taxon>Eutheria</taxon>
        <taxon>Euarchontoglires</taxon>
        <taxon>Primates</taxon>
        <taxon>Haplorrhini</taxon>
        <taxon>Catarrhini</taxon>
        <taxon>Hominidae</taxon>
        <taxon>Homo</taxon>
    </lineage>
</organism>
<dbReference type="EMBL" id="Z47542">
    <property type="protein sequence ID" value="CAA87590.1"/>
    <property type="molecule type" value="mRNA"/>
</dbReference>
<dbReference type="EMBL" id="U44754">
    <property type="protein sequence ID" value="AAC50358.1"/>
    <property type="molecule type" value="mRNA"/>
</dbReference>
<dbReference type="EMBL" id="BC014984">
    <property type="protein sequence ID" value="AAH14984.1"/>
    <property type="molecule type" value="mRNA"/>
</dbReference>
<dbReference type="EMBL" id="BC019038">
    <property type="protein sequence ID" value="AAH19038.1"/>
    <property type="molecule type" value="mRNA"/>
</dbReference>
<dbReference type="CCDS" id="CCDS9755.1"/>
<dbReference type="PIR" id="JC6081">
    <property type="entry name" value="JC6081"/>
</dbReference>
<dbReference type="RefSeq" id="NP_003073.1">
    <property type="nucleotide sequence ID" value="NM_003082.4"/>
</dbReference>
<dbReference type="PDB" id="7XUR">
    <property type="method" value="EM"/>
    <property type="resolution" value="3.49 A"/>
    <property type="chains" value="C=1-268"/>
</dbReference>
<dbReference type="PDB" id="7ZWC">
    <property type="method" value="EM"/>
    <property type="resolution" value="3.20 A"/>
    <property type="chains" value="a=1-368"/>
</dbReference>
<dbReference type="PDB" id="7ZWD">
    <property type="method" value="EM"/>
    <property type="resolution" value="3.00 A"/>
    <property type="chains" value="a=1-368"/>
</dbReference>
<dbReference type="PDB" id="7ZX7">
    <property type="method" value="EM"/>
    <property type="resolution" value="3.40 A"/>
    <property type="chains" value="a=1-368"/>
</dbReference>
<dbReference type="PDB" id="7ZX8">
    <property type="method" value="EM"/>
    <property type="resolution" value="3.00 A"/>
    <property type="chains" value="a=1-368"/>
</dbReference>
<dbReference type="PDB" id="7ZXE">
    <property type="method" value="EM"/>
    <property type="resolution" value="3.50 A"/>
    <property type="chains" value="a=1-368"/>
</dbReference>
<dbReference type="PDB" id="8ITY">
    <property type="method" value="EM"/>
    <property type="resolution" value="3.90 A"/>
    <property type="chains" value="1=1-368"/>
</dbReference>
<dbReference type="PDB" id="8IUE">
    <property type="method" value="EM"/>
    <property type="resolution" value="4.10 A"/>
    <property type="chains" value="1=1-368"/>
</dbReference>
<dbReference type="PDB" id="8IUH">
    <property type="method" value="EM"/>
    <property type="resolution" value="3.40 A"/>
    <property type="chains" value="1=1-368"/>
</dbReference>
<dbReference type="PDB" id="9FSO">
    <property type="method" value="EM"/>
    <property type="resolution" value="3.28 A"/>
    <property type="chains" value="U=1-368"/>
</dbReference>
<dbReference type="PDB" id="9FSP">
    <property type="method" value="EM"/>
    <property type="resolution" value="3.39 A"/>
    <property type="chains" value="U=1-368"/>
</dbReference>
<dbReference type="PDB" id="9FSQ">
    <property type="method" value="EM"/>
    <property type="resolution" value="3.51 A"/>
    <property type="chains" value="U=1-368"/>
</dbReference>
<dbReference type="PDB" id="9FSR">
    <property type="method" value="EM"/>
    <property type="resolution" value="3.76 A"/>
    <property type="chains" value="U=1-368"/>
</dbReference>
<dbReference type="PDB" id="9FSS">
    <property type="method" value="EM"/>
    <property type="resolution" value="4.14 A"/>
    <property type="chains" value="U=1-368"/>
</dbReference>
<dbReference type="PDBsum" id="7XUR"/>
<dbReference type="PDBsum" id="7ZWC"/>
<dbReference type="PDBsum" id="7ZWD"/>
<dbReference type="PDBsum" id="7ZX7"/>
<dbReference type="PDBsum" id="7ZX8"/>
<dbReference type="PDBsum" id="7ZXE"/>
<dbReference type="PDBsum" id="8ITY"/>
<dbReference type="PDBsum" id="8IUE"/>
<dbReference type="PDBsum" id="8IUH"/>
<dbReference type="PDBsum" id="9FSO"/>
<dbReference type="PDBsum" id="9FSP"/>
<dbReference type="PDBsum" id="9FSQ"/>
<dbReference type="PDBsum" id="9FSR"/>
<dbReference type="PDBsum" id="9FSS"/>
<dbReference type="EMDB" id="EMD-14996"/>
<dbReference type="EMDB" id="EMD-14997"/>
<dbReference type="EMDB" id="EMD-15006"/>
<dbReference type="EMDB" id="EMD-15007"/>
<dbReference type="EMDB" id="EMD-15009"/>
<dbReference type="EMDB" id="EMD-33477"/>
<dbReference type="EMDB" id="EMD-35712"/>
<dbReference type="EMDB" id="EMD-35719"/>
<dbReference type="EMDB" id="EMD-35722"/>
<dbReference type="EMDB" id="EMD-50730"/>
<dbReference type="EMDB" id="EMD-50731"/>
<dbReference type="EMDB" id="EMD-50732"/>
<dbReference type="EMDB" id="EMD-50733"/>
<dbReference type="EMDB" id="EMD-50734"/>
<dbReference type="SMR" id="Q16533"/>
<dbReference type="BioGRID" id="112501">
    <property type="interactions" value="114"/>
</dbReference>
<dbReference type="ComplexPortal" id="CPX-8637">
    <property type="entry name" value="SNAPc snRNA activating protein complex"/>
</dbReference>
<dbReference type="CORUM" id="Q16533"/>
<dbReference type="DIP" id="DIP-504N"/>
<dbReference type="FunCoup" id="Q16533">
    <property type="interactions" value="1092"/>
</dbReference>
<dbReference type="IntAct" id="Q16533">
    <property type="interactions" value="27"/>
</dbReference>
<dbReference type="STRING" id="9606.ENSP00000216294"/>
<dbReference type="GlyGen" id="Q16533">
    <property type="glycosylation" value="1 site, 1 O-linked glycan (1 site)"/>
</dbReference>
<dbReference type="iPTMnet" id="Q16533"/>
<dbReference type="PhosphoSitePlus" id="Q16533"/>
<dbReference type="BioMuta" id="SNAPC1"/>
<dbReference type="DMDM" id="8134716"/>
<dbReference type="jPOST" id="Q16533"/>
<dbReference type="MassIVE" id="Q16533"/>
<dbReference type="PaxDb" id="9606-ENSP00000216294"/>
<dbReference type="PeptideAtlas" id="Q16533"/>
<dbReference type="ProteomicsDB" id="60896"/>
<dbReference type="Pumba" id="Q16533"/>
<dbReference type="Antibodypedia" id="11585">
    <property type="antibodies" value="168 antibodies from 23 providers"/>
</dbReference>
<dbReference type="DNASU" id="6617"/>
<dbReference type="Ensembl" id="ENST00000216294.5">
    <property type="protein sequence ID" value="ENSP00000216294.4"/>
    <property type="gene ID" value="ENSG00000023608.5"/>
</dbReference>
<dbReference type="GeneID" id="6617"/>
<dbReference type="KEGG" id="hsa:6617"/>
<dbReference type="MANE-Select" id="ENST00000216294.5">
    <property type="protein sequence ID" value="ENSP00000216294.4"/>
    <property type="RefSeq nucleotide sequence ID" value="NM_003082.4"/>
    <property type="RefSeq protein sequence ID" value="NP_003073.1"/>
</dbReference>
<dbReference type="UCSC" id="uc001xft.3">
    <property type="organism name" value="human"/>
</dbReference>
<dbReference type="AGR" id="HGNC:11134"/>
<dbReference type="CTD" id="6617"/>
<dbReference type="DisGeNET" id="6617"/>
<dbReference type="GeneCards" id="SNAPC1"/>
<dbReference type="HGNC" id="HGNC:11134">
    <property type="gene designation" value="SNAPC1"/>
</dbReference>
<dbReference type="HPA" id="ENSG00000023608">
    <property type="expression patterns" value="Low tissue specificity"/>
</dbReference>
<dbReference type="MIM" id="600591">
    <property type="type" value="gene"/>
</dbReference>
<dbReference type="neXtProt" id="NX_Q16533"/>
<dbReference type="OpenTargets" id="ENSG00000023608"/>
<dbReference type="PharmGKB" id="PA35982"/>
<dbReference type="VEuPathDB" id="HostDB:ENSG00000023608"/>
<dbReference type="eggNOG" id="KOG4746">
    <property type="taxonomic scope" value="Eukaryota"/>
</dbReference>
<dbReference type="GeneTree" id="ENSGT00390000018691"/>
<dbReference type="HOGENOM" id="CLU_067254_0_0_1"/>
<dbReference type="InParanoid" id="Q16533"/>
<dbReference type="OMA" id="RDDMQNV"/>
<dbReference type="OrthoDB" id="20127at2759"/>
<dbReference type="PAN-GO" id="Q16533">
    <property type="GO annotations" value="4 GO annotations based on evolutionary models"/>
</dbReference>
<dbReference type="PhylomeDB" id="Q16533"/>
<dbReference type="TreeFam" id="TF324445"/>
<dbReference type="PathwayCommons" id="Q16533"/>
<dbReference type="Reactome" id="R-HSA-6807505">
    <property type="pathway name" value="RNA polymerase II transcribes snRNA genes"/>
</dbReference>
<dbReference type="Reactome" id="R-HSA-749476">
    <property type="pathway name" value="RNA Polymerase III Abortive And Retractive Initiation"/>
</dbReference>
<dbReference type="Reactome" id="R-HSA-76071">
    <property type="pathway name" value="RNA Polymerase III Transcription Initiation From Type 3 Promoter"/>
</dbReference>
<dbReference type="SignaLink" id="Q16533"/>
<dbReference type="BioGRID-ORCS" id="6617">
    <property type="hits" value="730 hits in 1153 CRISPR screens"/>
</dbReference>
<dbReference type="CD-CODE" id="91857CE7">
    <property type="entry name" value="Nucleolus"/>
</dbReference>
<dbReference type="CD-CODE" id="A0DCDA94">
    <property type="entry name" value="DNA damage foci"/>
</dbReference>
<dbReference type="ChiTaRS" id="SNAPC1">
    <property type="organism name" value="human"/>
</dbReference>
<dbReference type="GeneWiki" id="SNAPC1"/>
<dbReference type="GenomeRNAi" id="6617"/>
<dbReference type="Pharos" id="Q16533">
    <property type="development level" value="Tbio"/>
</dbReference>
<dbReference type="PRO" id="PR:Q16533"/>
<dbReference type="Proteomes" id="UP000005640">
    <property type="component" value="Chromosome 14"/>
</dbReference>
<dbReference type="RNAct" id="Q16533">
    <property type="molecule type" value="protein"/>
</dbReference>
<dbReference type="Bgee" id="ENSG00000023608">
    <property type="expression patterns" value="Expressed in cartilage tissue and 192 other cell types or tissues"/>
</dbReference>
<dbReference type="GO" id="GO:0005730">
    <property type="term" value="C:nucleolus"/>
    <property type="evidence" value="ECO:0000314"/>
    <property type="project" value="HPA"/>
</dbReference>
<dbReference type="GO" id="GO:0005654">
    <property type="term" value="C:nucleoplasm"/>
    <property type="evidence" value="ECO:0000314"/>
    <property type="project" value="HPA"/>
</dbReference>
<dbReference type="GO" id="GO:0019185">
    <property type="term" value="C:snRNA-activating protein complex"/>
    <property type="evidence" value="ECO:0000318"/>
    <property type="project" value="GO_Central"/>
</dbReference>
<dbReference type="GO" id="GO:0016251">
    <property type="term" value="F:RNA polymerase II general transcription initiation factor activity"/>
    <property type="evidence" value="ECO:0000304"/>
    <property type="project" value="ARUK-UCL"/>
</dbReference>
<dbReference type="GO" id="GO:0000995">
    <property type="term" value="F:RNA polymerase III general transcription initiation factor activity"/>
    <property type="evidence" value="ECO:0000304"/>
    <property type="project" value="ARUK-UCL"/>
</dbReference>
<dbReference type="GO" id="GO:0043565">
    <property type="term" value="F:sequence-specific DNA binding"/>
    <property type="evidence" value="ECO:0000318"/>
    <property type="project" value="GO_Central"/>
</dbReference>
<dbReference type="GO" id="GO:0042795">
    <property type="term" value="P:snRNA transcription by RNA polymerase II"/>
    <property type="evidence" value="ECO:0000318"/>
    <property type="project" value="GO_Central"/>
</dbReference>
<dbReference type="GO" id="GO:0042796">
    <property type="term" value="P:snRNA transcription by RNA polymerase III"/>
    <property type="evidence" value="ECO:0000318"/>
    <property type="project" value="GO_Central"/>
</dbReference>
<dbReference type="InterPro" id="IPR019188">
    <property type="entry name" value="SNAPC1"/>
</dbReference>
<dbReference type="PANTHER" id="PTHR15131">
    <property type="entry name" value="SMALL NUCLEAR RNA ACTIVATING COMPLEX, POLYPEPTIDE 1"/>
    <property type="match status" value="1"/>
</dbReference>
<dbReference type="PANTHER" id="PTHR15131:SF3">
    <property type="entry name" value="SNRNA-ACTIVATING PROTEIN COMPLEX SUBUNIT 1"/>
    <property type="match status" value="1"/>
</dbReference>
<dbReference type="Pfam" id="PF09808">
    <property type="entry name" value="SNAPC1"/>
    <property type="match status" value="1"/>
</dbReference>
<accession>Q16533</accession>
<protein>
    <recommendedName>
        <fullName>snRNA-activating protein complex subunit 1</fullName>
        <shortName>SNAPc subunit 1</shortName>
    </recommendedName>
    <alternativeName>
        <fullName>Proximal sequence element-binding transcription factor subunit gamma</fullName>
        <shortName>PSE-binding factor subunit gamma</shortName>
        <shortName>PTF subunit gamma</shortName>
    </alternativeName>
    <alternativeName>
        <fullName>Small nuclear RNA-activating complex polypeptide 1</fullName>
    </alternativeName>
    <alternativeName>
        <fullName>snRNA-activating protein complex 43 kDa subunit</fullName>
        <shortName>SNAPc 43 kDa subunit</shortName>
    </alternativeName>
</protein>
<sequence length="368" mass="42994">MGTPPGLQTDCEALLSRFQETDSVRFEDFTELWRNMKFGTIFCGRMRNLEKNMFTKEALALAWRYFLPPYTFQIRVGALYLLYGLYNTQLCQPKQKIRVALKDWDEVLKFQQDLVNAQHFDAAYIFRKLRLDRAFHFTAMPKLLSYRMKKKIHRAEVTEEFKDPSDRVMKLITSDVLEEMLNVHDHYQNMKHVISVDKSKPDKALSLIKDDFFDNIKNIVLEHQQWHKDRKNPSLKSKTNDGEEKMEGNSQETERCERAESLAKIKSKAFSVVIQASKSRRHRQVKLDSSDSDSASGQGQVKATRKKEKKERLKPAGRKMSLRNKGNVQNIHKEDKPLSLSMPVITEEEENESLSGTEFTASKKRRKH</sequence>
<keyword id="KW-0002">3D-structure</keyword>
<keyword id="KW-0903">Direct protein sequencing</keyword>
<keyword id="KW-0238">DNA-binding</keyword>
<keyword id="KW-0539">Nucleus</keyword>
<keyword id="KW-0597">Phosphoprotein</keyword>
<keyword id="KW-1267">Proteomics identification</keyword>
<keyword id="KW-1185">Reference proteome</keyword>
<keyword id="KW-0804">Transcription</keyword>
<keyword id="KW-0805">Transcription regulation</keyword>